<name>RIR2_HHV8P</name>
<reference key="1">
    <citation type="journal article" date="1999" name="J. Virol.">
        <title>Identification of a spliced gene from Kaposi's sarcoma-associated herpesvirus encoding a protein with similarities to latent membrane proteins 1 and 2A of Epstein-Barr virus.</title>
        <authorList>
            <person name="Glenn M."/>
            <person name="Rainbow L."/>
            <person name="Aurade F."/>
            <person name="Davison A."/>
            <person name="Schulz T.F."/>
        </authorList>
    </citation>
    <scope>NUCLEOTIDE SEQUENCE [LARGE SCALE GENOMIC DNA]</scope>
</reference>
<reference key="2">
    <citation type="journal article" date="2006" name="J. Gen. Virol.">
        <title>Kaposi's sarcoma-associated herpesvirus immune modulation: an overview.</title>
        <authorList>
            <person name="Rezaee S.A.R."/>
            <person name="Cunningham C."/>
            <person name="Davison A.J."/>
            <person name="Blackbourn D.J."/>
        </authorList>
    </citation>
    <scope>NUCLEOTIDE SEQUENCE [LARGE SCALE GENOMIC DNA]</scope>
</reference>
<sequence length="305" mass="34998">MDSVDRFLYTSDHDGFLALTRETWQNRWFPSQIPLHLDVSHVHQLSDADKDFYRFLFTFLGMAERLVNFNIEDLVTNFNSHDVAHYYAEQVAMENIHGVVYANILKIFFNNSRGELLAYAAKIILDPALCEKLEWLHSRVRKATTKAQKILMFLIVEGIYFISSFYSISLCRVRGIMPGVCLANDYISRDELLHTKAASMLYNTMVEIQEKPSHAEVQALFREAVNIEIRFIQAKAAGVTLVNVVDIRRFLEATADRILRDIFVPPIFGTPPPEACPLSYTGSFKAVNFFERDNSDYTTCVTDDL</sequence>
<accession>F5HAW0</accession>
<evidence type="ECO:0000255" key="1">
    <source>
        <dbReference type="HAMAP-Rule" id="MF_04028"/>
    </source>
</evidence>
<proteinExistence type="inferred from homology"/>
<dbReference type="EC" id="1.17.4.1" evidence="1"/>
<dbReference type="EMBL" id="AF148805">
    <property type="protein sequence ID" value="ABD28915.1"/>
    <property type="molecule type" value="Genomic_DNA"/>
</dbReference>
<dbReference type="RefSeq" id="YP_001129417.1">
    <property type="nucleotide sequence ID" value="NC_009333.1"/>
</dbReference>
<dbReference type="SMR" id="F5HAW0"/>
<dbReference type="BioGRID" id="1776958">
    <property type="interactions" value="2"/>
</dbReference>
<dbReference type="DNASU" id="4961455"/>
<dbReference type="GeneID" id="4961455"/>
<dbReference type="KEGG" id="vg:4961455"/>
<dbReference type="Proteomes" id="UP000000942">
    <property type="component" value="Segment"/>
</dbReference>
<dbReference type="GO" id="GO:0033644">
    <property type="term" value="C:host cell membrane"/>
    <property type="evidence" value="ECO:0007669"/>
    <property type="project" value="UniProtKB-SubCell"/>
</dbReference>
<dbReference type="GO" id="GO:0016020">
    <property type="term" value="C:membrane"/>
    <property type="evidence" value="ECO:0007669"/>
    <property type="project" value="UniProtKB-KW"/>
</dbReference>
<dbReference type="GO" id="GO:0046872">
    <property type="term" value="F:metal ion binding"/>
    <property type="evidence" value="ECO:0007669"/>
    <property type="project" value="UniProtKB-KW"/>
</dbReference>
<dbReference type="GO" id="GO:0004748">
    <property type="term" value="F:ribonucleoside-diphosphate reductase activity, thioredoxin disulfide as acceptor"/>
    <property type="evidence" value="ECO:0007669"/>
    <property type="project" value="UniProtKB-EC"/>
</dbReference>
<dbReference type="GO" id="GO:0009263">
    <property type="term" value="P:deoxyribonucleotide biosynthetic process"/>
    <property type="evidence" value="ECO:0007669"/>
    <property type="project" value="InterPro"/>
</dbReference>
<dbReference type="GO" id="GO:0006260">
    <property type="term" value="P:DNA replication"/>
    <property type="evidence" value="ECO:0007669"/>
    <property type="project" value="UniProtKB-KW"/>
</dbReference>
<dbReference type="CDD" id="cd01049">
    <property type="entry name" value="RNRR2"/>
    <property type="match status" value="1"/>
</dbReference>
<dbReference type="Gene3D" id="1.10.620.20">
    <property type="entry name" value="Ribonucleotide Reductase, subunit A"/>
    <property type="match status" value="1"/>
</dbReference>
<dbReference type="HAMAP" id="MF_04028">
    <property type="entry name" value="HSV_RIR2"/>
    <property type="match status" value="1"/>
</dbReference>
<dbReference type="InterPro" id="IPR009078">
    <property type="entry name" value="Ferritin-like_SF"/>
</dbReference>
<dbReference type="InterPro" id="IPR034715">
    <property type="entry name" value="HSV_RIR2"/>
</dbReference>
<dbReference type="InterPro" id="IPR012348">
    <property type="entry name" value="RNR-like"/>
</dbReference>
<dbReference type="InterPro" id="IPR033909">
    <property type="entry name" value="RNR_small"/>
</dbReference>
<dbReference type="InterPro" id="IPR030475">
    <property type="entry name" value="RNR_small_AS"/>
</dbReference>
<dbReference type="InterPro" id="IPR000358">
    <property type="entry name" value="RNR_small_fam"/>
</dbReference>
<dbReference type="PANTHER" id="PTHR23409">
    <property type="entry name" value="RIBONUCLEOSIDE-DIPHOSPHATE REDUCTASE SMALL CHAIN"/>
    <property type="match status" value="1"/>
</dbReference>
<dbReference type="PANTHER" id="PTHR23409:SF18">
    <property type="entry name" value="RIBONUCLEOSIDE-DIPHOSPHATE REDUCTASE SUBUNIT M2"/>
    <property type="match status" value="1"/>
</dbReference>
<dbReference type="Pfam" id="PF00268">
    <property type="entry name" value="Ribonuc_red_sm"/>
    <property type="match status" value="1"/>
</dbReference>
<dbReference type="SUPFAM" id="SSF47240">
    <property type="entry name" value="Ferritin-like"/>
    <property type="match status" value="1"/>
</dbReference>
<dbReference type="PROSITE" id="PS00368">
    <property type="entry name" value="RIBORED_SMALL"/>
    <property type="match status" value="1"/>
</dbReference>
<feature type="chain" id="PRO_0000423763" description="Ribonucleoside-diphosphate reductase small subunit">
    <location>
        <begin position="1"/>
        <end position="305"/>
    </location>
</feature>
<feature type="transmembrane region" description="Helical" evidence="1">
    <location>
        <begin position="150"/>
        <end position="170"/>
    </location>
</feature>
<feature type="active site" evidence="1">
    <location>
        <position position="101"/>
    </location>
</feature>
<feature type="binding site" evidence="1">
    <location>
        <position position="64"/>
    </location>
    <ligand>
        <name>Fe cation</name>
        <dbReference type="ChEBI" id="CHEBI:24875"/>
        <label>1</label>
    </ligand>
</feature>
<feature type="binding site" evidence="1">
    <location>
        <position position="94"/>
    </location>
    <ligand>
        <name>Fe cation</name>
        <dbReference type="ChEBI" id="CHEBI:24875"/>
        <label>1</label>
    </ligand>
</feature>
<feature type="binding site" evidence="1">
    <location>
        <position position="94"/>
    </location>
    <ligand>
        <name>Fe cation</name>
        <dbReference type="ChEBI" id="CHEBI:24875"/>
        <label>2</label>
    </ligand>
</feature>
<feature type="binding site" evidence="1">
    <location>
        <position position="97"/>
    </location>
    <ligand>
        <name>Fe cation</name>
        <dbReference type="ChEBI" id="CHEBI:24875"/>
        <label>1</label>
    </ligand>
</feature>
<feature type="binding site" evidence="1">
    <location>
        <position position="157"/>
    </location>
    <ligand>
        <name>Fe cation</name>
        <dbReference type="ChEBI" id="CHEBI:24875"/>
        <label>2</label>
    </ligand>
</feature>
<feature type="binding site" evidence="1">
    <location>
        <position position="191"/>
    </location>
    <ligand>
        <name>Fe cation</name>
        <dbReference type="ChEBI" id="CHEBI:24875"/>
        <label>2</label>
    </ligand>
</feature>
<feature type="binding site" evidence="1">
    <location>
        <position position="194"/>
    </location>
    <ligand>
        <name>Fe cation</name>
        <dbReference type="ChEBI" id="CHEBI:24875"/>
        <label>2</label>
    </ligand>
</feature>
<protein>
    <recommendedName>
        <fullName evidence="1">Ribonucleoside-diphosphate reductase small subunit</fullName>
        <ecNumber evidence="1">1.17.4.1</ecNumber>
    </recommendedName>
    <alternativeName>
        <fullName evidence="1">Ribonucleotide reductase small subunit</fullName>
    </alternativeName>
</protein>
<gene>
    <name evidence="1" type="primary">RIR2</name>
    <name type="synonym">ORF60</name>
</gene>
<organismHost>
    <name type="scientific">Homo sapiens</name>
    <name type="common">Human</name>
    <dbReference type="NCBI Taxonomy" id="9606"/>
</organismHost>
<comment type="function">
    <text evidence="1">Ribonucleoside-diphosphate reductase holoenzyme provides the precursors necessary for viral DNA synthesis. Allows virus growth in non-dividing cells, as well as reactivation from latency in infected hosts. Catalyzes the biosynthesis of deoxyribonucleotides from the corresponding ribonucleotides.</text>
</comment>
<comment type="catalytic activity">
    <reaction evidence="1">
        <text>a 2'-deoxyribonucleoside 5'-diphosphate + [thioredoxin]-disulfide + H2O = a ribonucleoside 5'-diphosphate + [thioredoxin]-dithiol</text>
        <dbReference type="Rhea" id="RHEA:23252"/>
        <dbReference type="Rhea" id="RHEA-COMP:10698"/>
        <dbReference type="Rhea" id="RHEA-COMP:10700"/>
        <dbReference type="ChEBI" id="CHEBI:15377"/>
        <dbReference type="ChEBI" id="CHEBI:29950"/>
        <dbReference type="ChEBI" id="CHEBI:50058"/>
        <dbReference type="ChEBI" id="CHEBI:57930"/>
        <dbReference type="ChEBI" id="CHEBI:73316"/>
        <dbReference type="EC" id="1.17.4.1"/>
    </reaction>
</comment>
<comment type="cofactor">
    <cofactor evidence="1">
        <name>Fe cation</name>
        <dbReference type="ChEBI" id="CHEBI:24875"/>
    </cofactor>
</comment>
<comment type="subunit">
    <text evidence="1">Heterotetramer composed of a homodimer of the large subunit (R1) and a homodimer of the small subunit (R2). Larger multisubunit protein complex are also active, composed of (R1)n(R2)n.</text>
</comment>
<comment type="subcellular location">
    <subcellularLocation>
        <location evidence="1">Host membrane</location>
        <topology evidence="1">Single-pass membrane protein</topology>
    </subcellularLocation>
</comment>
<comment type="similarity">
    <text evidence="1">Belongs to the ribonucleoside diphosphate reductase small chain family.</text>
</comment>
<organism>
    <name type="scientific">Human herpesvirus 8 type P (isolate GK18)</name>
    <name type="common">HHV-8</name>
    <name type="synonym">Kaposi's sarcoma-associated herpesvirus</name>
    <dbReference type="NCBI Taxonomy" id="868565"/>
    <lineage>
        <taxon>Viruses</taxon>
        <taxon>Duplodnaviria</taxon>
        <taxon>Heunggongvirae</taxon>
        <taxon>Peploviricota</taxon>
        <taxon>Herviviricetes</taxon>
        <taxon>Herpesvirales</taxon>
        <taxon>Orthoherpesviridae</taxon>
        <taxon>Gammaherpesvirinae</taxon>
        <taxon>Rhadinovirus</taxon>
        <taxon>Rhadinovirus humangamma8</taxon>
        <taxon>Human herpesvirus 8</taxon>
    </lineage>
</organism>
<keyword id="KW-0235">DNA replication</keyword>
<keyword id="KW-1043">Host membrane</keyword>
<keyword id="KW-0408">Iron</keyword>
<keyword id="KW-0472">Membrane</keyword>
<keyword id="KW-0479">Metal-binding</keyword>
<keyword id="KW-0560">Oxidoreductase</keyword>
<keyword id="KW-1185">Reference proteome</keyword>
<keyword id="KW-0812">Transmembrane</keyword>
<keyword id="KW-1133">Transmembrane helix</keyword>